<evidence type="ECO:0000250" key="1"/>
<evidence type="ECO:0000255" key="2">
    <source>
        <dbReference type="HAMAP-Rule" id="MF_00118"/>
    </source>
</evidence>
<keyword id="KW-0963">Cytoplasm</keyword>
<keyword id="KW-0251">Elongation factor</keyword>
<keyword id="KW-0342">GTP-binding</keyword>
<keyword id="KW-0378">Hydrolase</keyword>
<keyword id="KW-0460">Magnesium</keyword>
<keyword id="KW-0479">Metal-binding</keyword>
<keyword id="KW-0547">Nucleotide-binding</keyword>
<keyword id="KW-0648">Protein biosynthesis</keyword>
<sequence length="394" mass="42878">MAKAKFERTKPHVNIGTIGHVDHGKTSLTAAITIVLAKTGGAQATAYDQIDAAPEEKERGITISTAHVEYETKNRHYAHVDCPGHADYVKNMITGAAQMDGAILVVSAADGPMPQTREHILLAKQVGVPAMVVFLNKIDMVDDPDLLELVEMEVRELLSKYGFPGDEIPIIKGSALQALEGKPEGEKAINELMDAVDSYIPQPVRATDKPFLMPIEDVFSISGRGTVVTGRVESGIIKVGEEIEIVGLKDTQKTTCTGVEMFRKLLDEGQAGDNVGILLRGTKREEVERGQVLAKPGSIKPHDKFEAEVYVLSKEEGGRHTPFTNDYRPQFYFRTTDVTGTIKLPADKQMVMPGDNATFTVELIKPIAMQEGLKFSIREGGRTVGAGVVTKINN</sequence>
<reference key="1">
    <citation type="journal article" date="2009" name="PLoS ONE">
        <title>Genome sequence of the endosymbiont Rickettsia peacockii and comparison with virulent Rickettsia rickettsii: identification of virulence factors.</title>
        <authorList>
            <person name="Felsheim R.F."/>
            <person name="Kurtti T.J."/>
            <person name="Munderloh U.G."/>
        </authorList>
    </citation>
    <scope>NUCLEOTIDE SEQUENCE [LARGE SCALE GENOMIC DNA]</scope>
    <source>
        <strain>Rustic</strain>
    </source>
</reference>
<protein>
    <recommendedName>
        <fullName evidence="2">Elongation factor Tu</fullName>
        <shortName evidence="2">EF-Tu</shortName>
        <ecNumber evidence="2">3.6.5.3</ecNumber>
    </recommendedName>
</protein>
<dbReference type="EC" id="3.6.5.3" evidence="2"/>
<dbReference type="EMBL" id="CP001227">
    <property type="protein sequence ID" value="ACR47779.1"/>
    <property type="molecule type" value="Genomic_DNA"/>
</dbReference>
<dbReference type="RefSeq" id="WP_004997779.1">
    <property type="nucleotide sequence ID" value="NC_012730.1"/>
</dbReference>
<dbReference type="SMR" id="C4K2I2"/>
<dbReference type="GeneID" id="95361488"/>
<dbReference type="KEGG" id="rpk:RPR_06245"/>
<dbReference type="HOGENOM" id="CLU_007265_0_0_5"/>
<dbReference type="Proteomes" id="UP000005015">
    <property type="component" value="Chromosome"/>
</dbReference>
<dbReference type="GO" id="GO:0005737">
    <property type="term" value="C:cytoplasm"/>
    <property type="evidence" value="ECO:0007669"/>
    <property type="project" value="UniProtKB-SubCell"/>
</dbReference>
<dbReference type="GO" id="GO:0005525">
    <property type="term" value="F:GTP binding"/>
    <property type="evidence" value="ECO:0007669"/>
    <property type="project" value="UniProtKB-UniRule"/>
</dbReference>
<dbReference type="GO" id="GO:0003924">
    <property type="term" value="F:GTPase activity"/>
    <property type="evidence" value="ECO:0007669"/>
    <property type="project" value="InterPro"/>
</dbReference>
<dbReference type="GO" id="GO:0097216">
    <property type="term" value="F:guanosine tetraphosphate binding"/>
    <property type="evidence" value="ECO:0007669"/>
    <property type="project" value="UniProtKB-ARBA"/>
</dbReference>
<dbReference type="GO" id="GO:0003746">
    <property type="term" value="F:translation elongation factor activity"/>
    <property type="evidence" value="ECO:0007669"/>
    <property type="project" value="UniProtKB-UniRule"/>
</dbReference>
<dbReference type="CDD" id="cd01884">
    <property type="entry name" value="EF_Tu"/>
    <property type="match status" value="1"/>
</dbReference>
<dbReference type="CDD" id="cd03697">
    <property type="entry name" value="EFTU_II"/>
    <property type="match status" value="1"/>
</dbReference>
<dbReference type="CDD" id="cd03707">
    <property type="entry name" value="EFTU_III"/>
    <property type="match status" value="1"/>
</dbReference>
<dbReference type="FunFam" id="2.40.30.10:FF:000001">
    <property type="entry name" value="Elongation factor Tu"/>
    <property type="match status" value="1"/>
</dbReference>
<dbReference type="FunFam" id="3.40.50.300:FF:000003">
    <property type="entry name" value="Elongation factor Tu"/>
    <property type="match status" value="1"/>
</dbReference>
<dbReference type="Gene3D" id="3.40.50.300">
    <property type="entry name" value="P-loop containing nucleotide triphosphate hydrolases"/>
    <property type="match status" value="1"/>
</dbReference>
<dbReference type="Gene3D" id="2.40.30.10">
    <property type="entry name" value="Translation factors"/>
    <property type="match status" value="2"/>
</dbReference>
<dbReference type="HAMAP" id="MF_00118_B">
    <property type="entry name" value="EF_Tu_B"/>
    <property type="match status" value="1"/>
</dbReference>
<dbReference type="InterPro" id="IPR041709">
    <property type="entry name" value="EF-Tu_GTP-bd"/>
</dbReference>
<dbReference type="InterPro" id="IPR050055">
    <property type="entry name" value="EF-Tu_GTPase"/>
</dbReference>
<dbReference type="InterPro" id="IPR004161">
    <property type="entry name" value="EFTu-like_2"/>
</dbReference>
<dbReference type="InterPro" id="IPR033720">
    <property type="entry name" value="EFTU_2"/>
</dbReference>
<dbReference type="InterPro" id="IPR031157">
    <property type="entry name" value="G_TR_CS"/>
</dbReference>
<dbReference type="InterPro" id="IPR027417">
    <property type="entry name" value="P-loop_NTPase"/>
</dbReference>
<dbReference type="InterPro" id="IPR005225">
    <property type="entry name" value="Small_GTP-bd"/>
</dbReference>
<dbReference type="InterPro" id="IPR000795">
    <property type="entry name" value="T_Tr_GTP-bd_dom"/>
</dbReference>
<dbReference type="InterPro" id="IPR009000">
    <property type="entry name" value="Transl_B-barrel_sf"/>
</dbReference>
<dbReference type="InterPro" id="IPR009001">
    <property type="entry name" value="Transl_elong_EF1A/Init_IF2_C"/>
</dbReference>
<dbReference type="InterPro" id="IPR004541">
    <property type="entry name" value="Transl_elong_EFTu/EF1A_bac/org"/>
</dbReference>
<dbReference type="InterPro" id="IPR004160">
    <property type="entry name" value="Transl_elong_EFTu/EF1A_C"/>
</dbReference>
<dbReference type="NCBIfam" id="TIGR00485">
    <property type="entry name" value="EF-Tu"/>
    <property type="match status" value="1"/>
</dbReference>
<dbReference type="NCBIfam" id="NF000766">
    <property type="entry name" value="PRK00049.1"/>
    <property type="match status" value="1"/>
</dbReference>
<dbReference type="NCBIfam" id="NF009372">
    <property type="entry name" value="PRK12735.1"/>
    <property type="match status" value="1"/>
</dbReference>
<dbReference type="NCBIfam" id="NF009373">
    <property type="entry name" value="PRK12736.1"/>
    <property type="match status" value="1"/>
</dbReference>
<dbReference type="NCBIfam" id="TIGR00231">
    <property type="entry name" value="small_GTP"/>
    <property type="match status" value="1"/>
</dbReference>
<dbReference type="PANTHER" id="PTHR43721:SF22">
    <property type="entry name" value="ELONGATION FACTOR TU, MITOCHONDRIAL"/>
    <property type="match status" value="1"/>
</dbReference>
<dbReference type="PANTHER" id="PTHR43721">
    <property type="entry name" value="ELONGATION FACTOR TU-RELATED"/>
    <property type="match status" value="1"/>
</dbReference>
<dbReference type="Pfam" id="PF00009">
    <property type="entry name" value="GTP_EFTU"/>
    <property type="match status" value="1"/>
</dbReference>
<dbReference type="Pfam" id="PF03144">
    <property type="entry name" value="GTP_EFTU_D2"/>
    <property type="match status" value="1"/>
</dbReference>
<dbReference type="Pfam" id="PF03143">
    <property type="entry name" value="GTP_EFTU_D3"/>
    <property type="match status" value="1"/>
</dbReference>
<dbReference type="PRINTS" id="PR00315">
    <property type="entry name" value="ELONGATNFCT"/>
</dbReference>
<dbReference type="SUPFAM" id="SSF50465">
    <property type="entry name" value="EF-Tu/eEF-1alpha/eIF2-gamma C-terminal domain"/>
    <property type="match status" value="1"/>
</dbReference>
<dbReference type="SUPFAM" id="SSF52540">
    <property type="entry name" value="P-loop containing nucleoside triphosphate hydrolases"/>
    <property type="match status" value="1"/>
</dbReference>
<dbReference type="SUPFAM" id="SSF50447">
    <property type="entry name" value="Translation proteins"/>
    <property type="match status" value="1"/>
</dbReference>
<dbReference type="PROSITE" id="PS00301">
    <property type="entry name" value="G_TR_1"/>
    <property type="match status" value="1"/>
</dbReference>
<dbReference type="PROSITE" id="PS51722">
    <property type="entry name" value="G_TR_2"/>
    <property type="match status" value="1"/>
</dbReference>
<name>EFTU_RICPU</name>
<proteinExistence type="inferred from homology"/>
<gene>
    <name evidence="2" type="primary">tuf</name>
    <name type="ordered locus">RPR_06245</name>
</gene>
<comment type="function">
    <text evidence="2">GTP hydrolase that promotes the GTP-dependent binding of aminoacyl-tRNA to the A-site of ribosomes during protein biosynthesis.</text>
</comment>
<comment type="catalytic activity">
    <reaction evidence="2">
        <text>GTP + H2O = GDP + phosphate + H(+)</text>
        <dbReference type="Rhea" id="RHEA:19669"/>
        <dbReference type="ChEBI" id="CHEBI:15377"/>
        <dbReference type="ChEBI" id="CHEBI:15378"/>
        <dbReference type="ChEBI" id="CHEBI:37565"/>
        <dbReference type="ChEBI" id="CHEBI:43474"/>
        <dbReference type="ChEBI" id="CHEBI:58189"/>
        <dbReference type="EC" id="3.6.5.3"/>
    </reaction>
    <physiologicalReaction direction="left-to-right" evidence="2">
        <dbReference type="Rhea" id="RHEA:19670"/>
    </physiologicalReaction>
</comment>
<comment type="subunit">
    <text evidence="2">Monomer.</text>
</comment>
<comment type="subcellular location">
    <subcellularLocation>
        <location evidence="2">Cytoplasm</location>
    </subcellularLocation>
</comment>
<comment type="similarity">
    <text evidence="2">Belongs to the TRAFAC class translation factor GTPase superfamily. Classic translation factor GTPase family. EF-Tu/EF-1A subfamily.</text>
</comment>
<feature type="chain" id="PRO_1000203020" description="Elongation factor Tu">
    <location>
        <begin position="1"/>
        <end position="394"/>
    </location>
</feature>
<feature type="domain" description="tr-type G">
    <location>
        <begin position="10"/>
        <end position="204"/>
    </location>
</feature>
<feature type="region of interest" description="G1" evidence="1">
    <location>
        <begin position="19"/>
        <end position="26"/>
    </location>
</feature>
<feature type="region of interest" description="G2" evidence="1">
    <location>
        <begin position="60"/>
        <end position="64"/>
    </location>
</feature>
<feature type="region of interest" description="G3" evidence="1">
    <location>
        <begin position="81"/>
        <end position="84"/>
    </location>
</feature>
<feature type="region of interest" description="G4" evidence="1">
    <location>
        <begin position="136"/>
        <end position="139"/>
    </location>
</feature>
<feature type="region of interest" description="G5" evidence="1">
    <location>
        <begin position="174"/>
        <end position="176"/>
    </location>
</feature>
<feature type="binding site" evidence="2">
    <location>
        <begin position="19"/>
        <end position="26"/>
    </location>
    <ligand>
        <name>GTP</name>
        <dbReference type="ChEBI" id="CHEBI:37565"/>
    </ligand>
</feature>
<feature type="binding site" evidence="2">
    <location>
        <position position="26"/>
    </location>
    <ligand>
        <name>Mg(2+)</name>
        <dbReference type="ChEBI" id="CHEBI:18420"/>
    </ligand>
</feature>
<feature type="binding site" evidence="2">
    <location>
        <begin position="81"/>
        <end position="85"/>
    </location>
    <ligand>
        <name>GTP</name>
        <dbReference type="ChEBI" id="CHEBI:37565"/>
    </ligand>
</feature>
<feature type="binding site" evidence="2">
    <location>
        <begin position="136"/>
        <end position="139"/>
    </location>
    <ligand>
        <name>GTP</name>
        <dbReference type="ChEBI" id="CHEBI:37565"/>
    </ligand>
</feature>
<organism>
    <name type="scientific">Rickettsia peacockii (strain Rustic)</name>
    <dbReference type="NCBI Taxonomy" id="562019"/>
    <lineage>
        <taxon>Bacteria</taxon>
        <taxon>Pseudomonadati</taxon>
        <taxon>Pseudomonadota</taxon>
        <taxon>Alphaproteobacteria</taxon>
        <taxon>Rickettsiales</taxon>
        <taxon>Rickettsiaceae</taxon>
        <taxon>Rickettsieae</taxon>
        <taxon>Rickettsia</taxon>
        <taxon>spotted fever group</taxon>
    </lineage>
</organism>
<accession>C4K2I2</accession>